<dbReference type="EMBL" id="CP000468">
    <property type="protein sequence ID" value="ABJ02725.1"/>
    <property type="status" value="ALT_INIT"/>
    <property type="molecule type" value="Genomic_DNA"/>
</dbReference>
<dbReference type="RefSeq" id="WP_001622444.1">
    <property type="nucleotide sequence ID" value="NZ_CADILS010000003.1"/>
</dbReference>
<dbReference type="KEGG" id="ecv:APECO1_3202"/>
<dbReference type="HOGENOM" id="CLU_188292_0_0_6"/>
<dbReference type="Proteomes" id="UP000008216">
    <property type="component" value="Chromosome"/>
</dbReference>
<dbReference type="GO" id="GO:0005886">
    <property type="term" value="C:plasma membrane"/>
    <property type="evidence" value="ECO:0007669"/>
    <property type="project" value="UniProtKB-SubCell"/>
</dbReference>
<dbReference type="HAMAP" id="MF_01546">
    <property type="entry name" value="AaeX"/>
    <property type="match status" value="1"/>
</dbReference>
<dbReference type="InterPro" id="IPR012451">
    <property type="entry name" value="DUF1656"/>
</dbReference>
<dbReference type="NCBIfam" id="NF008615">
    <property type="entry name" value="PRK11594.1"/>
    <property type="match status" value="1"/>
</dbReference>
<dbReference type="Pfam" id="PF07869">
    <property type="entry name" value="DUF1656"/>
    <property type="match status" value="1"/>
</dbReference>
<comment type="subcellular location">
    <subcellularLocation>
        <location evidence="1">Cell membrane</location>
        <topology evidence="1">Multi-pass membrane protein</topology>
    </subcellularLocation>
</comment>
<comment type="induction">
    <text evidence="1">Positively coregulated with aaeA and aaeB by AaeR.</text>
</comment>
<comment type="similarity">
    <text evidence="1">Belongs to the AaeX family.</text>
</comment>
<comment type="sequence caution" evidence="2">
    <conflict type="erroneous initiation">
        <sequence resource="EMBL-CDS" id="ABJ02725"/>
    </conflict>
</comment>
<gene>
    <name evidence="1" type="primary">aaeX</name>
    <name type="ordered locus">Ecok1_32310</name>
    <name type="ORF">APECO1_3202</name>
</gene>
<sequence>MSLFPVIVVFGLSFPPIFFELLLSLAIFWLVRRVLLPTGIYDFVWHPALFNTALYCCLFYLISRLFV</sequence>
<organism>
    <name type="scientific">Escherichia coli O1:K1 / APEC</name>
    <dbReference type="NCBI Taxonomy" id="405955"/>
    <lineage>
        <taxon>Bacteria</taxon>
        <taxon>Pseudomonadati</taxon>
        <taxon>Pseudomonadota</taxon>
        <taxon>Gammaproteobacteria</taxon>
        <taxon>Enterobacterales</taxon>
        <taxon>Enterobacteriaceae</taxon>
        <taxon>Escherichia</taxon>
    </lineage>
</organism>
<keyword id="KW-1003">Cell membrane</keyword>
<keyword id="KW-0472">Membrane</keyword>
<keyword id="KW-1185">Reference proteome</keyword>
<keyword id="KW-0812">Transmembrane</keyword>
<keyword id="KW-1133">Transmembrane helix</keyword>
<proteinExistence type="inferred from homology"/>
<accession>A1AGD5</accession>
<reference key="1">
    <citation type="journal article" date="2007" name="J. Bacteriol.">
        <title>The genome sequence of avian pathogenic Escherichia coli strain O1:K1:H7 shares strong similarities with human extraintestinal pathogenic E. coli genomes.</title>
        <authorList>
            <person name="Johnson T.J."/>
            <person name="Kariyawasam S."/>
            <person name="Wannemuehler Y."/>
            <person name="Mangiamele P."/>
            <person name="Johnson S.J."/>
            <person name="Doetkott C."/>
            <person name="Skyberg J.A."/>
            <person name="Lynne A.M."/>
            <person name="Johnson J.R."/>
            <person name="Nolan L.K."/>
        </authorList>
    </citation>
    <scope>NUCLEOTIDE SEQUENCE [LARGE SCALE GENOMIC DNA]</scope>
</reference>
<evidence type="ECO:0000255" key="1">
    <source>
        <dbReference type="HAMAP-Rule" id="MF_01546"/>
    </source>
</evidence>
<evidence type="ECO:0000305" key="2"/>
<name>AAEX_ECOK1</name>
<feature type="chain" id="PRO_0000300574" description="Protein AaeX">
    <location>
        <begin position="1"/>
        <end position="67"/>
    </location>
</feature>
<feature type="transmembrane region" description="Helical" evidence="1">
    <location>
        <begin position="3"/>
        <end position="23"/>
    </location>
</feature>
<feature type="transmembrane region" description="Helical" evidence="1">
    <location>
        <begin position="43"/>
        <end position="63"/>
    </location>
</feature>
<protein>
    <recommendedName>
        <fullName evidence="1">Protein AaeX</fullName>
    </recommendedName>
</protein>